<evidence type="ECO:0000305" key="1"/>
<comment type="caution">
    <text evidence="1">Product of a dubious CDS prediction. May be a non-coding RNA.</text>
</comment>
<name>L3R2A_HUMAN</name>
<reference key="1">
    <citation type="submission" date="1999-07" db="EMBL/GenBank/DDBJ databases">
        <title>Sequence of a cDNA clone related to nasopharyngeal carcinoma.</title>
        <authorList>
            <person name="Xie Y."/>
            <person name="Deng L.-W."/>
            <person name="Jiang N."/>
            <person name="Zhan F.-H."/>
            <person name="Li G.-Y."/>
        </authorList>
    </citation>
    <scope>NUCLEOTIDE SEQUENCE [MRNA]</scope>
    <source>
        <tissue>Nasopharyngeal epithelium</tissue>
    </source>
</reference>
<feature type="chain" id="PRO_0000096693" description="Putative uncharacterized protein encoded by LINC00312">
    <location>
        <begin position="1"/>
        <end position="94"/>
    </location>
</feature>
<proteinExistence type="uncertain"/>
<organism>
    <name type="scientific">Homo sapiens</name>
    <name type="common">Human</name>
    <dbReference type="NCBI Taxonomy" id="9606"/>
    <lineage>
        <taxon>Eukaryota</taxon>
        <taxon>Metazoa</taxon>
        <taxon>Chordata</taxon>
        <taxon>Craniata</taxon>
        <taxon>Vertebrata</taxon>
        <taxon>Euteleostomi</taxon>
        <taxon>Mammalia</taxon>
        <taxon>Eutheria</taxon>
        <taxon>Euarchontoglires</taxon>
        <taxon>Primates</taxon>
        <taxon>Haplorrhini</taxon>
        <taxon>Catarrhini</taxon>
        <taxon>Hominidae</taxon>
        <taxon>Homo</taxon>
    </lineage>
</organism>
<keyword id="KW-1185">Reference proteome</keyword>
<gene>
    <name type="primary">LINC00312</name>
    <name type="synonym">LOH3CR2A</name>
    <name type="synonym">NCRNA00312</name>
    <name type="ORF">NAG7</name>
</gene>
<accession>Q9Y6C7</accession>
<dbReference type="EMBL" id="AF086709">
    <property type="protein sequence ID" value="AAD45398.1"/>
    <property type="molecule type" value="mRNA"/>
</dbReference>
<dbReference type="IntAct" id="Q9Y6C7">
    <property type="interactions" value="2"/>
</dbReference>
<dbReference type="MINT" id="Q9Y6C7"/>
<dbReference type="SwissPalm" id="Q9Y6C7"/>
<dbReference type="BioMuta" id="HGNC:6662"/>
<dbReference type="AGR" id="HGNC:6662"/>
<dbReference type="GeneCards" id="LINC00312"/>
<dbReference type="HGNC" id="HGNC:6662">
    <property type="gene designation" value="LINC00312"/>
</dbReference>
<dbReference type="MIM" id="610485">
    <property type="type" value="gene"/>
</dbReference>
<dbReference type="neXtProt" id="NX_Q9Y6C7"/>
<dbReference type="InParanoid" id="Q9Y6C7"/>
<dbReference type="PAN-GO" id="Q9Y6C7">
    <property type="GO annotations" value="0 GO annotations based on evolutionary models"/>
</dbReference>
<dbReference type="PathwayCommons" id="Q9Y6C7"/>
<dbReference type="SignaLink" id="Q9Y6C7"/>
<dbReference type="ChiTaRS" id="LINC00312">
    <property type="organism name" value="human"/>
</dbReference>
<dbReference type="Pharos" id="Q9Y6C7">
    <property type="development level" value="Tdark"/>
</dbReference>
<dbReference type="PRO" id="PR:Q9Y6C7"/>
<dbReference type="Proteomes" id="UP000005640">
    <property type="component" value="Unplaced"/>
</dbReference>
<dbReference type="RNAct" id="Q9Y6C7">
    <property type="molecule type" value="protein"/>
</dbReference>
<protein>
    <recommendedName>
        <fullName>Putative uncharacterized protein encoded by LINC00312</fullName>
    </recommendedName>
    <alternativeName>
        <fullName>Loss of heterozygosity 3 chromosomal region 2 gene A protein</fullName>
    </alternativeName>
</protein>
<sequence length="94" mass="11024">MAHHSLNTFYIWHNNVLHTHLVFFLPHLLNQPFSRGSFLIWLLLCWNSWYHLRTLRRQANQANKLSMMLLRVKQSPGTKLCHGDSELTSGLLAT</sequence>